<proteinExistence type="inferred from homology"/>
<organism>
    <name type="scientific">Akkermansia muciniphila (strain ATCC BAA-835 / DSM 22959 / JCM 33894 / BCRC 81048 / CCUG 64013 / CIP 107961 / Muc)</name>
    <dbReference type="NCBI Taxonomy" id="349741"/>
    <lineage>
        <taxon>Bacteria</taxon>
        <taxon>Pseudomonadati</taxon>
        <taxon>Verrucomicrobiota</taxon>
        <taxon>Verrucomicrobiia</taxon>
        <taxon>Verrucomicrobiales</taxon>
        <taxon>Akkermansiaceae</taxon>
        <taxon>Akkermansia</taxon>
    </lineage>
</organism>
<comment type="function">
    <text evidence="1">This protein binds to the 23S rRNA, and is important in its secondary structure. It is located near the subunit interface in the base of the L7/L12 stalk, and near the tRNA binding site of the peptidyltransferase center.</text>
</comment>
<comment type="subunit">
    <text evidence="1">Part of the 50S ribosomal subunit.</text>
</comment>
<comment type="similarity">
    <text evidence="1">Belongs to the universal ribosomal protein uL6 family.</text>
</comment>
<dbReference type="EMBL" id="CP001071">
    <property type="protein sequence ID" value="ACD04760.1"/>
    <property type="molecule type" value="Genomic_DNA"/>
</dbReference>
<dbReference type="RefSeq" id="WP_012419975.1">
    <property type="nucleotide sequence ID" value="NZ_CP071807.1"/>
</dbReference>
<dbReference type="SMR" id="B2UQM5"/>
<dbReference type="STRING" id="349741.Amuc_0928"/>
<dbReference type="PaxDb" id="349741-Amuc_0928"/>
<dbReference type="GeneID" id="60880183"/>
<dbReference type="KEGG" id="amu:Amuc_0928"/>
<dbReference type="eggNOG" id="COG0097">
    <property type="taxonomic scope" value="Bacteria"/>
</dbReference>
<dbReference type="HOGENOM" id="CLU_065464_1_2_0"/>
<dbReference type="OrthoDB" id="9805007at2"/>
<dbReference type="BioCyc" id="AMUC349741:G1GBX-1002-MONOMER"/>
<dbReference type="Proteomes" id="UP000001031">
    <property type="component" value="Chromosome"/>
</dbReference>
<dbReference type="GO" id="GO:0022625">
    <property type="term" value="C:cytosolic large ribosomal subunit"/>
    <property type="evidence" value="ECO:0007669"/>
    <property type="project" value="TreeGrafter"/>
</dbReference>
<dbReference type="GO" id="GO:0019843">
    <property type="term" value="F:rRNA binding"/>
    <property type="evidence" value="ECO:0007669"/>
    <property type="project" value="UniProtKB-UniRule"/>
</dbReference>
<dbReference type="GO" id="GO:0003735">
    <property type="term" value="F:structural constituent of ribosome"/>
    <property type="evidence" value="ECO:0007669"/>
    <property type="project" value="InterPro"/>
</dbReference>
<dbReference type="GO" id="GO:0002181">
    <property type="term" value="P:cytoplasmic translation"/>
    <property type="evidence" value="ECO:0007669"/>
    <property type="project" value="TreeGrafter"/>
</dbReference>
<dbReference type="FunFam" id="3.90.930.12:FF:000001">
    <property type="entry name" value="50S ribosomal protein L6"/>
    <property type="match status" value="1"/>
</dbReference>
<dbReference type="FunFam" id="3.90.930.12:FF:000002">
    <property type="entry name" value="50S ribosomal protein L6"/>
    <property type="match status" value="1"/>
</dbReference>
<dbReference type="Gene3D" id="3.90.930.12">
    <property type="entry name" value="Ribosomal protein L6, alpha-beta domain"/>
    <property type="match status" value="2"/>
</dbReference>
<dbReference type="HAMAP" id="MF_01365_B">
    <property type="entry name" value="Ribosomal_uL6_B"/>
    <property type="match status" value="1"/>
</dbReference>
<dbReference type="InterPro" id="IPR000702">
    <property type="entry name" value="Ribosomal_uL6-like"/>
</dbReference>
<dbReference type="InterPro" id="IPR036789">
    <property type="entry name" value="Ribosomal_uL6-like_a/b-dom_sf"/>
</dbReference>
<dbReference type="InterPro" id="IPR020040">
    <property type="entry name" value="Ribosomal_uL6_a/b-dom"/>
</dbReference>
<dbReference type="InterPro" id="IPR019906">
    <property type="entry name" value="Ribosomal_uL6_bac-type"/>
</dbReference>
<dbReference type="InterPro" id="IPR002358">
    <property type="entry name" value="Ribosomal_uL6_CS"/>
</dbReference>
<dbReference type="NCBIfam" id="TIGR03654">
    <property type="entry name" value="L6_bact"/>
    <property type="match status" value="1"/>
</dbReference>
<dbReference type="PANTHER" id="PTHR11655">
    <property type="entry name" value="60S/50S RIBOSOMAL PROTEIN L6/L9"/>
    <property type="match status" value="1"/>
</dbReference>
<dbReference type="PANTHER" id="PTHR11655:SF14">
    <property type="entry name" value="LARGE RIBOSOMAL SUBUNIT PROTEIN UL6M"/>
    <property type="match status" value="1"/>
</dbReference>
<dbReference type="Pfam" id="PF00347">
    <property type="entry name" value="Ribosomal_L6"/>
    <property type="match status" value="2"/>
</dbReference>
<dbReference type="PIRSF" id="PIRSF002162">
    <property type="entry name" value="Ribosomal_L6"/>
    <property type="match status" value="1"/>
</dbReference>
<dbReference type="PRINTS" id="PR00059">
    <property type="entry name" value="RIBOSOMALL6"/>
</dbReference>
<dbReference type="SUPFAM" id="SSF56053">
    <property type="entry name" value="Ribosomal protein L6"/>
    <property type="match status" value="2"/>
</dbReference>
<dbReference type="PROSITE" id="PS00525">
    <property type="entry name" value="RIBOSOMAL_L6_1"/>
    <property type="match status" value="1"/>
</dbReference>
<sequence length="179" mass="19245">MSRVGKKSITLPDKVTVKVNGSSVQVEGPKGKLSWTLPEGITATVEGNQLSVDRAGESRQLRALHGTNRSLLNNMVIGVSEGFVKNLEIVGVGFRAAVKGNILDLNLGKSHPINQVIPEGLKVTVTENTKVTVEGIDKQVVGQFAAEVRAYYPPEPYKGKGVRFVGEVIRRKEGKSVGK</sequence>
<keyword id="KW-1185">Reference proteome</keyword>
<keyword id="KW-0687">Ribonucleoprotein</keyword>
<keyword id="KW-0689">Ribosomal protein</keyword>
<keyword id="KW-0694">RNA-binding</keyword>
<keyword id="KW-0699">rRNA-binding</keyword>
<name>RL6_AKKM8</name>
<accession>B2UQM5</accession>
<reference key="1">
    <citation type="journal article" date="2011" name="PLoS ONE">
        <title>The genome of Akkermansia muciniphila, a dedicated intestinal mucin degrader, and its use in exploring intestinal metagenomes.</title>
        <authorList>
            <person name="van Passel M.W."/>
            <person name="Kant R."/>
            <person name="Zoetendal E.G."/>
            <person name="Plugge C.M."/>
            <person name="Derrien M."/>
            <person name="Malfatti S.A."/>
            <person name="Chain P.S."/>
            <person name="Woyke T."/>
            <person name="Palva A."/>
            <person name="de Vos W.M."/>
            <person name="Smidt H."/>
        </authorList>
    </citation>
    <scope>NUCLEOTIDE SEQUENCE [LARGE SCALE GENOMIC DNA]</scope>
    <source>
        <strain>ATCC BAA-835 / DSM 22959 / JCM 33894 / BCRC 81048 / CCUG 64013 / CIP 107961 / Muc</strain>
    </source>
</reference>
<evidence type="ECO:0000255" key="1">
    <source>
        <dbReference type="HAMAP-Rule" id="MF_01365"/>
    </source>
</evidence>
<evidence type="ECO:0000305" key="2"/>
<protein>
    <recommendedName>
        <fullName evidence="1">Large ribosomal subunit protein uL6</fullName>
    </recommendedName>
    <alternativeName>
        <fullName evidence="2">50S ribosomal protein L6</fullName>
    </alternativeName>
</protein>
<feature type="chain" id="PRO_1000143938" description="Large ribosomal subunit protein uL6">
    <location>
        <begin position="1"/>
        <end position="179"/>
    </location>
</feature>
<gene>
    <name evidence="1" type="primary">rplF</name>
    <name type="ordered locus">Amuc_0928</name>
</gene>